<proteinExistence type="predicted"/>
<gene>
    <name type="ordered locus">MPN_103</name>
    <name type="ORF">C09_orf172</name>
    <name type="ORF">MP051</name>
</gene>
<accession>P75566</accession>
<feature type="chain" id="PRO_0000210645" description="Uncharacterized protein MPN_103">
    <location>
        <begin position="1"/>
        <end position="172"/>
    </location>
</feature>
<organism>
    <name type="scientific">Mycoplasma pneumoniae (strain ATCC 29342 / M129 / Subtype 1)</name>
    <name type="common">Mycoplasmoides pneumoniae</name>
    <dbReference type="NCBI Taxonomy" id="272634"/>
    <lineage>
        <taxon>Bacteria</taxon>
        <taxon>Bacillati</taxon>
        <taxon>Mycoplasmatota</taxon>
        <taxon>Mycoplasmoidales</taxon>
        <taxon>Mycoplasmoidaceae</taxon>
        <taxon>Mycoplasmoides</taxon>
    </lineage>
</organism>
<protein>
    <recommendedName>
        <fullName>Uncharacterized protein MPN_103</fullName>
    </recommendedName>
</protein>
<name>Y103_MYCPN</name>
<dbReference type="EMBL" id="U00089">
    <property type="protein sequence ID" value="AAB95699.1"/>
    <property type="molecule type" value="Genomic_DNA"/>
</dbReference>
<dbReference type="PIR" id="S73377">
    <property type="entry name" value="S73377"/>
</dbReference>
<dbReference type="RefSeq" id="NP_109791.1">
    <property type="nucleotide sequence ID" value="NC_000912.1"/>
</dbReference>
<dbReference type="RefSeq" id="WP_010874460.1">
    <property type="nucleotide sequence ID" value="NZ_OU342337.1"/>
</dbReference>
<dbReference type="IntAct" id="P75566">
    <property type="interactions" value="2"/>
</dbReference>
<dbReference type="EnsemblBacteria" id="AAB95699">
    <property type="protein sequence ID" value="AAB95699"/>
    <property type="gene ID" value="MPN_103"/>
</dbReference>
<dbReference type="KEGG" id="mpn:MPN_103"/>
<dbReference type="HOGENOM" id="CLU_1738504_0_0_14"/>
<dbReference type="BioCyc" id="MPNE272634:G1GJ3-176-MONOMER"/>
<dbReference type="Proteomes" id="UP000000808">
    <property type="component" value="Chromosome"/>
</dbReference>
<keyword id="KW-1185">Reference proteome</keyword>
<sequence length="172" mass="21221">MKLSKFLIKLAMCYILIWFRHFLLSSIRIIGTTWTFWTAWFFGAFRNIWCIRIIGNRWLFRSFWSTGTLRSIFNTRILWFFRSLRFLFNYFNWWFWFILDLLKYFEPTFTLFLFGALDLKKKFNFIACKLPVLFFSNGKEFIFTHHFLNKARQQLISSKRPFVALLINELHK</sequence>
<reference key="1">
    <citation type="journal article" date="1996" name="Nucleic Acids Res.">
        <title>Complete sequence analysis of the genome of the bacterium Mycoplasma pneumoniae.</title>
        <authorList>
            <person name="Himmelreich R."/>
            <person name="Hilbert H."/>
            <person name="Plagens H."/>
            <person name="Pirkl E."/>
            <person name="Li B.-C."/>
            <person name="Herrmann R."/>
        </authorList>
    </citation>
    <scope>NUCLEOTIDE SEQUENCE [LARGE SCALE GENOMIC DNA]</scope>
    <source>
        <strain>ATCC 29342 / M129 / Subtype 1</strain>
    </source>
</reference>